<reference key="1">
    <citation type="submission" date="2007-11" db="EMBL/GenBank/DDBJ databases">
        <authorList>
            <consortium name="The Salmonella enterica serovar Arizonae Genome Sequencing Project"/>
            <person name="McClelland M."/>
            <person name="Sanderson E.K."/>
            <person name="Porwollik S."/>
            <person name="Spieth J."/>
            <person name="Clifton W.S."/>
            <person name="Fulton R."/>
            <person name="Chunyan W."/>
            <person name="Wollam A."/>
            <person name="Shah N."/>
            <person name="Pepin K."/>
            <person name="Bhonagiri V."/>
            <person name="Nash W."/>
            <person name="Johnson M."/>
            <person name="Thiruvilangam P."/>
            <person name="Wilson R."/>
        </authorList>
    </citation>
    <scope>NUCLEOTIDE SEQUENCE [LARGE SCALE GENOMIC DNA]</scope>
    <source>
        <strain>ATCC BAA-731 / CDC346-86 / RSK2980</strain>
    </source>
</reference>
<accession>A9MML1</accession>
<organism>
    <name type="scientific">Salmonella arizonae (strain ATCC BAA-731 / CDC346-86 / RSK2980)</name>
    <dbReference type="NCBI Taxonomy" id="41514"/>
    <lineage>
        <taxon>Bacteria</taxon>
        <taxon>Pseudomonadati</taxon>
        <taxon>Pseudomonadota</taxon>
        <taxon>Gammaproteobacteria</taxon>
        <taxon>Enterobacterales</taxon>
        <taxon>Enterobacteriaceae</taxon>
        <taxon>Salmonella</taxon>
    </lineage>
</organism>
<proteinExistence type="inferred from homology"/>
<feature type="chain" id="PRO_1000083313" description="Flagellar hook-basal body complex protein FliE">
    <location>
        <begin position="1"/>
        <end position="104"/>
    </location>
</feature>
<keyword id="KW-0975">Bacterial flagellum</keyword>
<keyword id="KW-1185">Reference proteome</keyword>
<dbReference type="EMBL" id="CP000880">
    <property type="protein sequence ID" value="ABX20880.1"/>
    <property type="molecule type" value="Genomic_DNA"/>
</dbReference>
<dbReference type="SMR" id="A9MML1"/>
<dbReference type="STRING" id="41514.SARI_00969"/>
<dbReference type="KEGG" id="ses:SARI_00969"/>
<dbReference type="HOGENOM" id="CLU_147249_0_2_6"/>
<dbReference type="Proteomes" id="UP000002084">
    <property type="component" value="Chromosome"/>
</dbReference>
<dbReference type="GO" id="GO:0009425">
    <property type="term" value="C:bacterial-type flagellum basal body"/>
    <property type="evidence" value="ECO:0007669"/>
    <property type="project" value="UniProtKB-SubCell"/>
</dbReference>
<dbReference type="GO" id="GO:0003774">
    <property type="term" value="F:cytoskeletal motor activity"/>
    <property type="evidence" value="ECO:0007669"/>
    <property type="project" value="InterPro"/>
</dbReference>
<dbReference type="GO" id="GO:0005198">
    <property type="term" value="F:structural molecule activity"/>
    <property type="evidence" value="ECO:0007669"/>
    <property type="project" value="InterPro"/>
</dbReference>
<dbReference type="GO" id="GO:0071973">
    <property type="term" value="P:bacterial-type flagellum-dependent cell motility"/>
    <property type="evidence" value="ECO:0007669"/>
    <property type="project" value="InterPro"/>
</dbReference>
<dbReference type="HAMAP" id="MF_00724">
    <property type="entry name" value="FliE"/>
    <property type="match status" value="1"/>
</dbReference>
<dbReference type="InterPro" id="IPR001624">
    <property type="entry name" value="FliE"/>
</dbReference>
<dbReference type="NCBIfam" id="TIGR00205">
    <property type="entry name" value="fliE"/>
    <property type="match status" value="1"/>
</dbReference>
<dbReference type="PANTHER" id="PTHR34653">
    <property type="match status" value="1"/>
</dbReference>
<dbReference type="PANTHER" id="PTHR34653:SF1">
    <property type="entry name" value="FLAGELLAR HOOK-BASAL BODY COMPLEX PROTEIN FLIE"/>
    <property type="match status" value="1"/>
</dbReference>
<dbReference type="Pfam" id="PF02049">
    <property type="entry name" value="FliE"/>
    <property type="match status" value="1"/>
</dbReference>
<dbReference type="PRINTS" id="PR01006">
    <property type="entry name" value="FLGHOOKFLIE"/>
</dbReference>
<comment type="subcellular location">
    <subcellularLocation>
        <location evidence="1">Bacterial flagellum basal body</location>
    </subcellularLocation>
</comment>
<comment type="similarity">
    <text evidence="1">Belongs to the FliE family.</text>
</comment>
<name>FLIE_SALAR</name>
<sequence>MAAIQGIEGVISQLQATAVGARGQETQSQPTMSFAGQLHAALDRISDRQTEARVQAEKFTLGEPGIALNDVMADMQKASVSMQMGIQVRNKLVAAYQEVMSMQV</sequence>
<protein>
    <recommendedName>
        <fullName evidence="1">Flagellar hook-basal body complex protein FliE</fullName>
    </recommendedName>
</protein>
<evidence type="ECO:0000255" key="1">
    <source>
        <dbReference type="HAMAP-Rule" id="MF_00724"/>
    </source>
</evidence>
<gene>
    <name evidence="1" type="primary">fliE</name>
    <name type="ordered locus">SARI_00969</name>
</gene>